<evidence type="ECO:0000255" key="1"/>
<evidence type="ECO:0000255" key="2">
    <source>
        <dbReference type="PROSITE-ProRule" id="PRU01103"/>
    </source>
</evidence>
<evidence type="ECO:0000255" key="3">
    <source>
        <dbReference type="PROSITE-ProRule" id="PRU10094"/>
    </source>
</evidence>
<evidence type="ECO:0000269" key="4">
    <source>
    </source>
</evidence>
<evidence type="ECO:0000269" key="5">
    <source>
    </source>
</evidence>
<evidence type="ECO:0000269" key="6">
    <source>
    </source>
</evidence>
<evidence type="ECO:0000269" key="7">
    <source>
    </source>
</evidence>
<evidence type="ECO:0000269" key="8">
    <source>
    </source>
</evidence>
<evidence type="ECO:0000269" key="9">
    <source>
    </source>
</evidence>
<evidence type="ECO:0000269" key="10">
    <source>
    </source>
</evidence>
<evidence type="ECO:0000303" key="11">
    <source>
    </source>
</evidence>
<evidence type="ECO:0000303" key="12">
    <source>
    </source>
</evidence>
<evidence type="ECO:0000305" key="13"/>
<evidence type="ECO:0000305" key="14">
    <source>
    </source>
</evidence>
<evidence type="ECO:0000312" key="15">
    <source>
        <dbReference type="Proteomes" id="UP000054289"/>
    </source>
</evidence>
<evidence type="ECO:0007744" key="16">
    <source>
        <dbReference type="PDB" id="3QRV"/>
    </source>
</evidence>
<evidence type="ECO:0007744" key="17">
    <source>
        <dbReference type="PDB" id="3QS1"/>
    </source>
</evidence>
<evidence type="ECO:0007829" key="18">
    <source>
        <dbReference type="PDB" id="3QRV"/>
    </source>
</evidence>
<evidence type="ECO:0007829" key="19">
    <source>
        <dbReference type="PDB" id="3QS1"/>
    </source>
</evidence>
<keyword id="KW-0002">3D-structure</keyword>
<keyword id="KW-0064">Aspartyl protease</keyword>
<keyword id="KW-0903">Direct protein sequencing</keyword>
<keyword id="KW-1015">Disulfide bond</keyword>
<keyword id="KW-0378">Hydrolase</keyword>
<keyword id="KW-0472">Membrane</keyword>
<keyword id="KW-0645">Protease</keyword>
<keyword id="KW-1185">Reference proteome</keyword>
<keyword id="KW-0735">Signal-anchor</keyword>
<keyword id="KW-0812">Transmembrane</keyword>
<keyword id="KW-1133">Transmembrane helix</keyword>
<keyword id="KW-0926">Vacuole</keyword>
<keyword id="KW-0865">Zymogen</keyword>
<name>PLM1_PLAFX</name>
<reference key="1">
    <citation type="journal article" date="1994" name="EMBO J.">
        <title>Molecular characterization and inhibition of a Plasmodium falciparum aspartic hemoglobinase.</title>
        <authorList>
            <person name="Francis S.E."/>
            <person name="Gluzman I.Y."/>
            <person name="Oksman A."/>
            <person name="Knickerbocker A."/>
            <person name="Mueller R."/>
            <person name="Bryant M.L."/>
            <person name="Sherman D.R."/>
            <person name="Russell D.G."/>
            <person name="Goldberg D.E."/>
        </authorList>
    </citation>
    <scope>NUCLEOTIDE SEQUENCE [MRNA]</scope>
    <scope>FUNCTION</scope>
    <scope>CATALYTIC ACTIVITY</scope>
    <scope>SUBCELLULAR LOCATION</scope>
    <scope>DEVELOPMENTAL STAGE</scope>
    <source>
        <strain>FAF-2</strain>
    </source>
</reference>
<reference evidence="15" key="2">
    <citation type="submission" date="2006-03" db="EMBL/GenBank/DDBJ databases">
        <title>Annotation of Plasmodium falciparum HB3.</title>
        <authorList>
            <consortium name="The Broad Institute Genome Sequencing Platform"/>
            <person name="Volkman S.K."/>
            <person name="Neafsey D.E."/>
            <person name="Dash A.P."/>
            <person name="Chitnis C.E."/>
            <person name="Hartl D.L."/>
            <person name="Young S.K."/>
            <person name="Zeng Q."/>
            <person name="Koehrsen M."/>
            <person name="Alvarado L."/>
            <person name="Berlin A."/>
            <person name="Borenstein D."/>
            <person name="Chapman S.B."/>
            <person name="Chen Z."/>
            <person name="Engels R."/>
            <person name="Freedman E."/>
            <person name="Gellesch M."/>
            <person name="Goldberg J."/>
            <person name="Griggs A."/>
            <person name="Gujja S."/>
            <person name="Heilman E.R."/>
            <person name="Heiman D.I."/>
            <person name="Howarth C."/>
            <person name="Jen D."/>
            <person name="Larson L."/>
            <person name="Mehta T."/>
            <person name="Neiman D."/>
            <person name="Park D."/>
            <person name="Pearson M."/>
            <person name="Roberts A."/>
            <person name="Saif S."/>
            <person name="Shea T."/>
            <person name="Shenoy N."/>
            <person name="Sisk P."/>
            <person name="Stolte C."/>
            <person name="Sykes S."/>
            <person name="Walk T."/>
            <person name="White J."/>
            <person name="Yandava C."/>
            <person name="Haas B."/>
            <person name="Henn M.R."/>
            <person name="Nusbaum C."/>
            <person name="Birren B."/>
        </authorList>
    </citation>
    <scope>NUCLEOTIDE SEQUENCE [LARGE SCALE GENOMIC DNA]</scope>
    <source>
        <strain evidence="15">HB3</strain>
    </source>
</reference>
<reference key="3">
    <citation type="journal article" date="1991" name="J. Exp. Med.">
        <title>Hemoglobin degradation in the human malaria pathogen Plasmodium falciparum: a catabolic pathway initiated by a specific aspartic protease.</title>
        <authorList>
            <person name="Goldberg D.E."/>
            <person name="Slater A.F.G."/>
            <person name="Beavis R."/>
            <person name="Chait B."/>
            <person name="Cerami A."/>
            <person name="Henderson G.B."/>
        </authorList>
    </citation>
    <scope>PROTEIN SEQUENCE OF 125-146</scope>
    <scope>FUNCTION</scope>
    <scope>CATALYTIC ACTIVITY</scope>
    <scope>BIOPHYSICOCHEMICAL PROPERTIES</scope>
    <scope>SUBCELLULAR LOCATION</scope>
    <scope>DEVELOPMENTAL STAGE</scope>
</reference>
<reference key="4">
    <citation type="journal article" date="1996" name="Mol. Biochem. Parasitol.">
        <title>Kinetic analysis of plasmepsins I and II aspartic proteases of the Plasmodium falciparum digestive vacuole.</title>
        <authorList>
            <person name="Luker K.E."/>
            <person name="Francis S.E."/>
            <person name="Gluzman I.Y."/>
            <person name="Goldberg D.E."/>
        </authorList>
    </citation>
    <scope>FUNCTION</scope>
    <scope>CATALYTIC ACTIVITY</scope>
    <scope>ACTIVITY REGULATION</scope>
</reference>
<reference key="5">
    <citation type="journal article" date="1997" name="J. Biol. Chem.">
        <title>Biosynthesis and maturation of the malaria aspartic hemoglobinases plasmepsins I and II.</title>
        <authorList>
            <person name="Francis S.E."/>
            <person name="Banerjee R."/>
            <person name="Goldberg D.E."/>
        </authorList>
    </citation>
    <scope>SUBCELLULAR LOCATION</scope>
    <scope>DEVELOPMENTAL STAGE</scope>
    <scope>PROTEOLYTIC CLEAVAGE</scope>
    <scope>TOPOLOGY</scope>
    <scope>LACK OF GLYCOSYLATION</scope>
</reference>
<reference key="6">
    <citation type="journal article" date="2002" name="Proc. Natl. Acad. Sci. U.S.A.">
        <title>Four plasmepsins are active in the Plasmodium falciparum food vacuole, including a protease with an active-site histidine.</title>
        <authorList>
            <person name="Banerjee R."/>
            <person name="Liu J."/>
            <person name="Beatty W."/>
            <person name="Pelosof L."/>
            <person name="Klemba M."/>
            <person name="Goldberg D.E."/>
        </authorList>
    </citation>
    <scope>SUBCELLULAR LOCATION</scope>
    <scope>DEVELOPMENTAL STAGE</scope>
</reference>
<reference key="7">
    <citation type="journal article" date="2003" name="Mol. Biochem. Parasitol.">
        <title>Food vacuole plasmepsins are processed at a conserved site by an acidic convertase activity in Plasmodium falciparum.</title>
        <authorList>
            <person name="Banerjee R."/>
            <person name="Francis S.E."/>
            <person name="Goldberg D.E."/>
        </authorList>
    </citation>
    <scope>DEVELOPMENTAL STAGE</scope>
    <scope>PROTEOLYTIC CLEAVAGE</scope>
</reference>
<reference evidence="16 17" key="8">
    <citation type="journal article" date="2011" name="J. Struct. Biol.">
        <title>Crystal structures of the free and inhibited forms of plasmepsin I (PMI) from Plasmodium falciparum.</title>
        <authorList>
            <person name="Bhaumik P."/>
            <person name="Horimoto Y."/>
            <person name="Xiao H."/>
            <person name="Miura T."/>
            <person name="Hidaka K."/>
            <person name="Kiso Y."/>
            <person name="Wlodawer A."/>
            <person name="Yada R.Y."/>
            <person name="Gustchina A."/>
        </authorList>
    </citation>
    <scope>X-RAY CRYSTALLOGRAPHY (2.40 ANGSTROMS) OF 117-452 IN COMPLEX WITH INHIBITOR</scope>
    <scope>DISULFIDE BONDS</scope>
</reference>
<comment type="function">
    <text evidence="6 8 9 13">During the asexual blood stage, catalyzes the initial cleavage of native host hemoglobin (Hb) resulting in Hb denaturation; specifically cleaves between Phe-33 and Leu-34 of Hb alpha-chain (PubMed:2007860, PubMed:8313875, PubMed:8844673). Digestion of host Hb is an essential step which provides the parasite with amino acids for protein synthesis, and regulates osmolarity (Probable).</text>
</comment>
<comment type="catalytic activity">
    <reaction evidence="6 8 9">
        <text>Hydrolysis of the 33-Phe-|-Leu-34 bond in the alpha-chain of hemoglobin, leading to denaturation of molecule.</text>
        <dbReference type="EC" id="3.4.23.38"/>
    </reaction>
</comment>
<comment type="activity regulation">
    <text evidence="9">Inhibited by pepstatin A.</text>
</comment>
<comment type="biophysicochemical properties">
    <phDependence>
        <text evidence="6">Optimum pH is 4.5-5.</text>
    </phDependence>
</comment>
<comment type="subcellular location">
    <subcellularLocation>
        <location evidence="10">Membrane</location>
        <topology evidence="10">Single-pass type II membrane protein</topology>
    </subcellularLocation>
    <subcellularLocation>
        <location evidence="4 6 8 10">Vacuole lumen</location>
    </subcellularLocation>
    <subcellularLocation>
        <location evidence="14">Vacuole membrane</location>
    </subcellularLocation>
    <text evidence="8 10">At the beginning of the asexual blood stage, the transmembrane zymogen is transported to the cytostome, an endocytic structure spanning the parasite cell membrane and the parasitophorous vacuole membrane where host proteins such as hemoglobin are endocytosed (PubMed:9169469). Following endocytosis, localizes to the cytostome vacuole membrane to be then delivered to the digestive (or food) vacuole where it is cleaved into the soluble and active enzyme (PubMed:9169469). In trophozoites, localizes to the digestive vacuole, an acidic vacuole where host hemoglobin is digested (PubMed:8313875, PubMed:9169469).</text>
</comment>
<comment type="developmental stage">
    <text evidence="4 5 6 8 10">Expressed during the asexual blood stage; expression begins in late rings, increases in trophozoites and continues in schizonts (at protein level).</text>
</comment>
<comment type="PTM">
    <text evidence="10">Not N-glycosylated.</text>
</comment>
<comment type="PTM">
    <text evidence="5 10">Proteolytically cleaved into the soluble active mature form in the digestive vacuole by cysteine protease falcipains; the process begins at the early ring stage (PubMed:12850260, PubMed:9169469). Proteolysis requires an acidic environment (PubMed:12850260, PubMed:9169469).</text>
</comment>
<comment type="similarity">
    <text evidence="13">Belongs to the peptidase A1 family.</text>
</comment>
<comment type="caution">
    <text evidence="5 6">The position of the proteolytic cleavage is unclear (PubMed:12850260, PubMed:2007860). One study shows a cleavage between Asn-124 and Ala-125 (PubMed:2007860). Another study shows a cleavage between Gly-123 and Asn-124 (PubMed:12850260).</text>
</comment>
<organism evidence="15">
    <name type="scientific">Plasmodium falciparum (isolate HB3)</name>
    <dbReference type="NCBI Taxonomy" id="137071"/>
    <lineage>
        <taxon>Eukaryota</taxon>
        <taxon>Sar</taxon>
        <taxon>Alveolata</taxon>
        <taxon>Apicomplexa</taxon>
        <taxon>Aconoidasida</taxon>
        <taxon>Haemosporida</taxon>
        <taxon>Plasmodiidae</taxon>
        <taxon>Plasmodium</taxon>
        <taxon>Plasmodium (Laverania)</taxon>
    </lineage>
</organism>
<sequence>MALSIKEDFSSAFAKNESAVNSSTFNNNMKTWKIQKRFQILYVFFFLLITGALFYYLIDNVLFPKNKKINEIMNTSKHVIIGFSIENSHDRIMKTVKQHRLKNYIKESLKFFKTGLTQKPHLGNAGDSVTLNDVANVMYYGEAQIGDNKQKFAFIFDTGSANLWVPSAQCNTIGCKTKNLYDSNKSKTYEKDGTKVEMNYVSGTVSGFFSKDIVTIANLSFPYKFIEVTDTNGFEPAYTLGQFDGIVGLGWKDLSIGSVDPVVVELKNQNKIEQAVFTFYLPFDDKHKGYLTIGGIEDRFYEGQLTYEKLNHDLYWQVDLDLHFGNLTVEKATAIVDSGTSSITAPTEFLNKFFEGLDVVKIPFLPLYITTCNNPKLPTLEFRSATNVYTLEPEYYLQQIFDFGISLCMVSIIPVDLNKNTFILGDPFMRKYFTVFDYDNHTVGFALAKKKL</sequence>
<feature type="propeptide" id="PRO_0000025928" evidence="5">
    <location>
        <begin position="1"/>
        <end position="123"/>
    </location>
</feature>
<feature type="chain" id="PRO_0000025929" description="Plasmepsin I">
    <location>
        <begin position="124"/>
        <end position="452"/>
    </location>
</feature>
<feature type="topological domain" description="Cytoplasmic" evidence="14">
    <location>
        <begin position="1"/>
        <end position="37"/>
    </location>
</feature>
<feature type="transmembrane region" description="Helical; Signal-anchor for type II membrane protein" evidence="1">
    <location>
        <begin position="38"/>
        <end position="58"/>
    </location>
</feature>
<feature type="topological domain" description="Lumenal" evidence="14">
    <location>
        <begin position="59"/>
        <end position="452"/>
    </location>
</feature>
<feature type="domain" description="Peptidase A1" evidence="2">
    <location>
        <begin position="139"/>
        <end position="446"/>
    </location>
</feature>
<feature type="active site" evidence="3">
    <location>
        <position position="157"/>
    </location>
</feature>
<feature type="active site" evidence="3">
    <location>
        <position position="337"/>
    </location>
</feature>
<feature type="disulfide bond" evidence="7 16 17">
    <location>
        <begin position="170"/>
        <end position="175"/>
    </location>
</feature>
<feature type="disulfide bond" evidence="7 16 17">
    <location>
        <begin position="372"/>
        <end position="408"/>
    </location>
</feature>
<feature type="strand" evidence="18">
    <location>
        <begin position="127"/>
        <end position="134"/>
    </location>
</feature>
<feature type="turn" evidence="18">
    <location>
        <begin position="135"/>
        <end position="137"/>
    </location>
</feature>
<feature type="strand" evidence="18">
    <location>
        <begin position="138"/>
        <end position="145"/>
    </location>
</feature>
<feature type="turn" evidence="18">
    <location>
        <begin position="146"/>
        <end position="149"/>
    </location>
</feature>
<feature type="strand" evidence="18">
    <location>
        <begin position="150"/>
        <end position="157"/>
    </location>
</feature>
<feature type="strand" evidence="18">
    <location>
        <begin position="162"/>
        <end position="167"/>
    </location>
</feature>
<feature type="helix" evidence="18">
    <location>
        <begin position="175"/>
        <end position="177"/>
    </location>
</feature>
<feature type="helix" evidence="18">
    <location>
        <begin position="183"/>
        <end position="185"/>
    </location>
</feature>
<feature type="strand" evidence="18">
    <location>
        <begin position="190"/>
        <end position="196"/>
    </location>
</feature>
<feature type="strand" evidence="18">
    <location>
        <begin position="205"/>
        <end position="216"/>
    </location>
</feature>
<feature type="strand" evidence="18">
    <location>
        <begin position="219"/>
        <end position="234"/>
    </location>
</feature>
<feature type="turn" evidence="18">
    <location>
        <begin position="238"/>
        <end position="240"/>
    </location>
</feature>
<feature type="strand" evidence="18">
    <location>
        <begin position="244"/>
        <end position="248"/>
    </location>
</feature>
<feature type="helix" evidence="18">
    <location>
        <begin position="252"/>
        <end position="254"/>
    </location>
</feature>
<feature type="helix" evidence="18">
    <location>
        <begin position="262"/>
        <end position="268"/>
    </location>
</feature>
<feature type="strand" evidence="18">
    <location>
        <begin position="271"/>
        <end position="280"/>
    </location>
</feature>
<feature type="strand" evidence="19">
    <location>
        <begin position="283"/>
        <end position="287"/>
    </location>
</feature>
<feature type="strand" evidence="18">
    <location>
        <begin position="289"/>
        <end position="295"/>
    </location>
</feature>
<feature type="helix" evidence="18">
    <location>
        <begin position="298"/>
        <end position="300"/>
    </location>
</feature>
<feature type="strand" evidence="18">
    <location>
        <begin position="301"/>
        <end position="309"/>
    </location>
</feature>
<feature type="turn" evidence="18">
    <location>
        <begin position="313"/>
        <end position="316"/>
    </location>
</feature>
<feature type="strand" evidence="18">
    <location>
        <begin position="317"/>
        <end position="324"/>
    </location>
</feature>
<feature type="strand" evidence="18">
    <location>
        <begin position="327"/>
        <end position="336"/>
    </location>
</feature>
<feature type="strand" evidence="18">
    <location>
        <begin position="341"/>
        <end position="345"/>
    </location>
</feature>
<feature type="helix" evidence="18">
    <location>
        <begin position="347"/>
        <end position="354"/>
    </location>
</feature>
<feature type="turn" evidence="18">
    <location>
        <begin position="355"/>
        <end position="358"/>
    </location>
</feature>
<feature type="strand" evidence="18">
    <location>
        <begin position="368"/>
        <end position="371"/>
    </location>
</feature>
<feature type="strand" evidence="18">
    <location>
        <begin position="380"/>
        <end position="383"/>
    </location>
</feature>
<feature type="strand" evidence="18">
    <location>
        <begin position="388"/>
        <end position="391"/>
    </location>
</feature>
<feature type="helix" evidence="18">
    <location>
        <begin position="393"/>
        <end position="396"/>
    </location>
</feature>
<feature type="strand" evidence="18">
    <location>
        <begin position="397"/>
        <end position="401"/>
    </location>
</feature>
<feature type="strand" evidence="18">
    <location>
        <begin position="403"/>
        <end position="405"/>
    </location>
</feature>
<feature type="strand" evidence="18">
    <location>
        <begin position="407"/>
        <end position="414"/>
    </location>
</feature>
<feature type="strand" evidence="18">
    <location>
        <begin position="421"/>
        <end position="424"/>
    </location>
</feature>
<feature type="helix" evidence="18">
    <location>
        <begin position="426"/>
        <end position="431"/>
    </location>
</feature>
<feature type="strand" evidence="18">
    <location>
        <begin position="432"/>
        <end position="437"/>
    </location>
</feature>
<feature type="turn" evidence="18">
    <location>
        <begin position="438"/>
        <end position="441"/>
    </location>
</feature>
<feature type="strand" evidence="18">
    <location>
        <begin position="442"/>
        <end position="448"/>
    </location>
</feature>
<gene>
    <name evidence="12" type="primary">PMI</name>
</gene>
<protein>
    <recommendedName>
        <fullName evidence="12">Plasmepsin I</fullName>
        <ecNumber evidence="6 8 9">3.4.23.38</ecNumber>
    </recommendedName>
    <alternativeName>
        <fullName evidence="11">Aspartic hemoglobinase I</fullName>
    </alternativeName>
    <alternativeName>
        <fullName evidence="13">Plasmepsin 1</fullName>
    </alternativeName>
</protein>
<dbReference type="EC" id="3.4.23.38" evidence="6 8 9"/>
<dbReference type="EMBL" id="X75787">
    <property type="protein sequence ID" value="CAA53432.1"/>
    <property type="molecule type" value="mRNA"/>
</dbReference>
<dbReference type="EMBL" id="CH671923">
    <property type="protein sequence ID" value="KOB58716.1"/>
    <property type="molecule type" value="Genomic_DNA"/>
</dbReference>
<dbReference type="PIR" id="S41717">
    <property type="entry name" value="S41717"/>
</dbReference>
<dbReference type="PDB" id="3QRV">
    <property type="method" value="X-ray"/>
    <property type="resolution" value="2.40 A"/>
    <property type="chains" value="A/B=117-452"/>
</dbReference>
<dbReference type="PDB" id="3QS1">
    <property type="method" value="X-ray"/>
    <property type="resolution" value="3.10 A"/>
    <property type="chains" value="A/B/C/D=117-452"/>
</dbReference>
<dbReference type="PDBsum" id="3QRV"/>
<dbReference type="PDBsum" id="3QS1"/>
<dbReference type="SMR" id="P39898"/>
<dbReference type="BindingDB" id="P39898"/>
<dbReference type="ChEMBL" id="CHEMBL4687"/>
<dbReference type="MEROPS" id="A01.022"/>
<dbReference type="EnsemblProtists" id="CZT99786">
    <property type="protein sequence ID" value="CZT99786"/>
    <property type="gene ID" value="PF3D7_1407900"/>
</dbReference>
<dbReference type="EnsemblProtists" id="KOB58716">
    <property type="protein sequence ID" value="KOB58716"/>
    <property type="gene ID" value="PFHG_00464"/>
</dbReference>
<dbReference type="KEGG" id="pfh:PFHG_00464"/>
<dbReference type="VEuPathDB" id="PlasmoDB:PF3D7_1407900"/>
<dbReference type="VEuPathDB" id="PlasmoDB:Pf7G8-2_000483100"/>
<dbReference type="VEuPathDB" id="PlasmoDB:Pf7G8_140013300"/>
<dbReference type="VEuPathDB" id="PlasmoDB:PfCD01_140013600"/>
<dbReference type="VEuPathDB" id="PlasmoDB:PfDd2_140012500"/>
<dbReference type="VEuPathDB" id="PlasmoDB:PfGA01_140013600"/>
<dbReference type="VEuPathDB" id="PlasmoDB:PfGB4_140014100"/>
<dbReference type="VEuPathDB" id="PlasmoDB:PfGN01_140013200"/>
<dbReference type="VEuPathDB" id="PlasmoDB:PfHB3_140013800"/>
<dbReference type="VEuPathDB" id="PlasmoDB:PfIT_140014500"/>
<dbReference type="VEuPathDB" id="PlasmoDB:PfKE01_140013200"/>
<dbReference type="VEuPathDB" id="PlasmoDB:PfKH01_140013500"/>
<dbReference type="VEuPathDB" id="PlasmoDB:PfKH02_140013800"/>
<dbReference type="VEuPathDB" id="PlasmoDB:PfML01_140013400"/>
<dbReference type="VEuPathDB" id="PlasmoDB:PfNF135_140013400"/>
<dbReference type="VEuPathDB" id="PlasmoDB:PfNF166_140012100"/>
<dbReference type="VEuPathDB" id="PlasmoDB:PfNF54_140012900"/>
<dbReference type="VEuPathDB" id="PlasmoDB:PfSD01_140011400"/>
<dbReference type="VEuPathDB" id="PlasmoDB:PfSN01_140015300"/>
<dbReference type="VEuPathDB" id="PlasmoDB:PfTG01_140013300"/>
<dbReference type="OMA" id="KGEYMIS"/>
<dbReference type="OrthoDB" id="461at418107"/>
<dbReference type="BioCyc" id="MetaCyc:MONOMER-15375"/>
<dbReference type="BRENDA" id="3.4.23.38">
    <property type="organism ID" value="4889"/>
</dbReference>
<dbReference type="EvolutionaryTrace" id="P39898"/>
<dbReference type="Proteomes" id="UP000054289">
    <property type="component" value="Unassembled WGS sequence"/>
</dbReference>
<dbReference type="GO" id="GO:0031910">
    <property type="term" value="C:cytostome"/>
    <property type="evidence" value="ECO:0000314"/>
    <property type="project" value="UniProtKB"/>
</dbReference>
<dbReference type="GO" id="GO:0020020">
    <property type="term" value="C:food vacuole"/>
    <property type="evidence" value="ECO:0000314"/>
    <property type="project" value="UniProtKB"/>
</dbReference>
<dbReference type="GO" id="GO:0005775">
    <property type="term" value="C:vacuolar lumen"/>
    <property type="evidence" value="ECO:0007669"/>
    <property type="project" value="UniProtKB-SubCell"/>
</dbReference>
<dbReference type="GO" id="GO:0005774">
    <property type="term" value="C:vacuolar membrane"/>
    <property type="evidence" value="ECO:0007669"/>
    <property type="project" value="UniProtKB-SubCell"/>
</dbReference>
<dbReference type="GO" id="GO:0004190">
    <property type="term" value="F:aspartic-type endopeptidase activity"/>
    <property type="evidence" value="ECO:0000314"/>
    <property type="project" value="UniProtKB"/>
</dbReference>
<dbReference type="GO" id="GO:0044002">
    <property type="term" value="P:acquisition of nutrients from host"/>
    <property type="evidence" value="ECO:0000314"/>
    <property type="project" value="UniProtKB"/>
</dbReference>
<dbReference type="GO" id="GO:0006508">
    <property type="term" value="P:proteolysis"/>
    <property type="evidence" value="ECO:0007669"/>
    <property type="project" value="UniProtKB-KW"/>
</dbReference>
<dbReference type="CDD" id="cd05471">
    <property type="entry name" value="pepsin_like"/>
    <property type="match status" value="1"/>
</dbReference>
<dbReference type="FunFam" id="2.40.70.10:FF:000035">
    <property type="entry name" value="Plasmepsin-2"/>
    <property type="match status" value="1"/>
</dbReference>
<dbReference type="FunFam" id="2.40.70.10:FF:000038">
    <property type="entry name" value="Plasmepsin-2"/>
    <property type="match status" value="1"/>
</dbReference>
<dbReference type="Gene3D" id="2.40.70.10">
    <property type="entry name" value="Acid Proteases"/>
    <property type="match status" value="2"/>
</dbReference>
<dbReference type="InterPro" id="IPR001461">
    <property type="entry name" value="Aspartic_peptidase_A1"/>
</dbReference>
<dbReference type="InterPro" id="IPR001969">
    <property type="entry name" value="Aspartic_peptidase_AS"/>
</dbReference>
<dbReference type="InterPro" id="IPR034164">
    <property type="entry name" value="Pepsin-like_dom"/>
</dbReference>
<dbReference type="InterPro" id="IPR033121">
    <property type="entry name" value="PEPTIDASE_A1"/>
</dbReference>
<dbReference type="InterPro" id="IPR021109">
    <property type="entry name" value="Peptidase_aspartic_dom_sf"/>
</dbReference>
<dbReference type="PANTHER" id="PTHR47966">
    <property type="entry name" value="BETA-SITE APP-CLEAVING ENZYME, ISOFORM A-RELATED"/>
    <property type="match status" value="1"/>
</dbReference>
<dbReference type="PANTHER" id="PTHR47966:SF51">
    <property type="entry name" value="BETA-SITE APP-CLEAVING ENZYME, ISOFORM A-RELATED"/>
    <property type="match status" value="1"/>
</dbReference>
<dbReference type="Pfam" id="PF00026">
    <property type="entry name" value="Asp"/>
    <property type="match status" value="1"/>
</dbReference>
<dbReference type="PRINTS" id="PR00792">
    <property type="entry name" value="PEPSIN"/>
</dbReference>
<dbReference type="SUPFAM" id="SSF50630">
    <property type="entry name" value="Acid proteases"/>
    <property type="match status" value="1"/>
</dbReference>
<dbReference type="PROSITE" id="PS00141">
    <property type="entry name" value="ASP_PROTEASE"/>
    <property type="match status" value="2"/>
</dbReference>
<dbReference type="PROSITE" id="PS51767">
    <property type="entry name" value="PEPTIDASE_A1"/>
    <property type="match status" value="1"/>
</dbReference>
<proteinExistence type="evidence at protein level"/>
<accession>P39898</accession>
<accession>A0A0L7K6M8</accession>